<comment type="function">
    <text evidence="1">This is one of the proteins that bind and probably mediate the attachment of the 5S RNA into the large ribosomal subunit, where it forms part of the central protuberance. In the 70S ribosome it contacts protein S13 of the 30S subunit (bridge B1b), connecting the 2 subunits; this bridge is implicated in subunit movement. Contacts the P site tRNA; the 5S rRNA and some of its associated proteins might help stabilize positioning of ribosome-bound tRNAs.</text>
</comment>
<comment type="subunit">
    <text evidence="1">Part of the 50S ribosomal subunit; part of the 5S rRNA/L5/L18/L25 subcomplex. Contacts the 5S rRNA and the P site tRNA. Forms a bridge to the 30S subunit in the 70S ribosome.</text>
</comment>
<comment type="similarity">
    <text evidence="1">Belongs to the universal ribosomal protein uL5 family.</text>
</comment>
<organism>
    <name type="scientific">Corynebacterium glutamicum (strain ATCC 13032 / DSM 20300 / JCM 1318 / BCRC 11384 / CCUG 27702 / LMG 3730 / NBRC 12168 / NCIMB 10025 / NRRL B-2784 / 534)</name>
    <dbReference type="NCBI Taxonomy" id="196627"/>
    <lineage>
        <taxon>Bacteria</taxon>
        <taxon>Bacillati</taxon>
        <taxon>Actinomycetota</taxon>
        <taxon>Actinomycetes</taxon>
        <taxon>Mycobacteriales</taxon>
        <taxon>Corynebacteriaceae</taxon>
        <taxon>Corynebacterium</taxon>
    </lineage>
</organism>
<name>RL5_CORGL</name>
<keyword id="KW-1185">Reference proteome</keyword>
<keyword id="KW-0687">Ribonucleoprotein</keyword>
<keyword id="KW-0689">Ribosomal protein</keyword>
<keyword id="KW-0694">RNA-binding</keyword>
<keyword id="KW-0699">rRNA-binding</keyword>
<keyword id="KW-0820">tRNA-binding</keyword>
<gene>
    <name evidence="1" type="primary">rplE</name>
    <name type="ordered locus">Cgl0523</name>
    <name type="ordered locus">cg0610</name>
</gene>
<feature type="chain" id="PRO_0000124921" description="Large ribosomal subunit protein uL5">
    <location>
        <begin position="1"/>
        <end position="191"/>
    </location>
</feature>
<proteinExistence type="inferred from homology"/>
<sequence length="191" mass="21789">MTENYIPRLKTRYQDEIRTKLQGEFEFENVMQIPGVTKIVVNMGVGDAARDSKLINGAIEDLTAITGQKPQLRRAKKSIANFKLREGMPIGAKVTLRGDRMWEFLDRLLTVALPRIRDFRGLSDQQFDGHGNYTFGLTEQTMFYEIDVDKIDRPRGMDITVVTTAVTDDEGRSLLRELGFPFKGEDGNRQQ</sequence>
<reference key="1">
    <citation type="journal article" date="2003" name="Appl. Microbiol. Biotechnol.">
        <title>The Corynebacterium glutamicum genome: features and impacts on biotechnological processes.</title>
        <authorList>
            <person name="Ikeda M."/>
            <person name="Nakagawa S."/>
        </authorList>
    </citation>
    <scope>NUCLEOTIDE SEQUENCE [LARGE SCALE GENOMIC DNA]</scope>
    <source>
        <strain>ATCC 13032 / DSM 20300 / JCM 1318 / BCRC 11384 / CCUG 27702 / LMG 3730 / NBRC 12168 / NCIMB 10025 / NRRL B-2784 / 534</strain>
    </source>
</reference>
<reference key="2">
    <citation type="journal article" date="2003" name="J. Biotechnol.">
        <title>The complete Corynebacterium glutamicum ATCC 13032 genome sequence and its impact on the production of L-aspartate-derived amino acids and vitamins.</title>
        <authorList>
            <person name="Kalinowski J."/>
            <person name="Bathe B."/>
            <person name="Bartels D."/>
            <person name="Bischoff N."/>
            <person name="Bott M."/>
            <person name="Burkovski A."/>
            <person name="Dusch N."/>
            <person name="Eggeling L."/>
            <person name="Eikmanns B.J."/>
            <person name="Gaigalat L."/>
            <person name="Goesmann A."/>
            <person name="Hartmann M."/>
            <person name="Huthmacher K."/>
            <person name="Kraemer R."/>
            <person name="Linke B."/>
            <person name="McHardy A.C."/>
            <person name="Meyer F."/>
            <person name="Moeckel B."/>
            <person name="Pfefferle W."/>
            <person name="Puehler A."/>
            <person name="Rey D.A."/>
            <person name="Rueckert C."/>
            <person name="Rupp O."/>
            <person name="Sahm H."/>
            <person name="Wendisch V.F."/>
            <person name="Wiegraebe I."/>
            <person name="Tauch A."/>
        </authorList>
    </citation>
    <scope>NUCLEOTIDE SEQUENCE [LARGE SCALE GENOMIC DNA]</scope>
    <source>
        <strain>ATCC 13032 / DSM 20300 / JCM 1318 / BCRC 11384 / CCUG 27702 / LMG 3730 / NBRC 12168 / NCIMB 10025 / NRRL B-2784 / 534</strain>
    </source>
</reference>
<accession>Q8NSZ2</accession>
<accession>Q6M7M5</accession>
<protein>
    <recommendedName>
        <fullName evidence="1">Large ribosomal subunit protein uL5</fullName>
    </recommendedName>
    <alternativeName>
        <fullName evidence="2">50S ribosomal protein L5</fullName>
    </alternativeName>
</protein>
<evidence type="ECO:0000255" key="1">
    <source>
        <dbReference type="HAMAP-Rule" id="MF_01333"/>
    </source>
</evidence>
<evidence type="ECO:0000305" key="2"/>
<dbReference type="EMBL" id="BA000036">
    <property type="protein sequence ID" value="BAB97916.1"/>
    <property type="molecule type" value="Genomic_DNA"/>
</dbReference>
<dbReference type="EMBL" id="BX927149">
    <property type="protein sequence ID" value="CAF19231.1"/>
    <property type="molecule type" value="Genomic_DNA"/>
</dbReference>
<dbReference type="RefSeq" id="NP_599762.1">
    <property type="nucleotide sequence ID" value="NC_003450.3"/>
</dbReference>
<dbReference type="RefSeq" id="WP_003854317.1">
    <property type="nucleotide sequence ID" value="NC_006958.1"/>
</dbReference>
<dbReference type="SMR" id="Q8NSZ2"/>
<dbReference type="STRING" id="196627.cg0610"/>
<dbReference type="GeneID" id="1021523"/>
<dbReference type="KEGG" id="cgb:cg0610"/>
<dbReference type="KEGG" id="cgl:Cgl0523"/>
<dbReference type="PATRIC" id="fig|196627.13.peg.517"/>
<dbReference type="eggNOG" id="COG0094">
    <property type="taxonomic scope" value="Bacteria"/>
</dbReference>
<dbReference type="HOGENOM" id="CLU_061015_2_1_11"/>
<dbReference type="OrthoDB" id="9806626at2"/>
<dbReference type="BioCyc" id="CORYNE:G18NG-10085-MONOMER"/>
<dbReference type="Proteomes" id="UP000000582">
    <property type="component" value="Chromosome"/>
</dbReference>
<dbReference type="Proteomes" id="UP000001009">
    <property type="component" value="Chromosome"/>
</dbReference>
<dbReference type="GO" id="GO:1990904">
    <property type="term" value="C:ribonucleoprotein complex"/>
    <property type="evidence" value="ECO:0007669"/>
    <property type="project" value="UniProtKB-KW"/>
</dbReference>
<dbReference type="GO" id="GO:0005840">
    <property type="term" value="C:ribosome"/>
    <property type="evidence" value="ECO:0007669"/>
    <property type="project" value="UniProtKB-KW"/>
</dbReference>
<dbReference type="GO" id="GO:0019843">
    <property type="term" value="F:rRNA binding"/>
    <property type="evidence" value="ECO:0007669"/>
    <property type="project" value="UniProtKB-UniRule"/>
</dbReference>
<dbReference type="GO" id="GO:0003735">
    <property type="term" value="F:structural constituent of ribosome"/>
    <property type="evidence" value="ECO:0007669"/>
    <property type="project" value="InterPro"/>
</dbReference>
<dbReference type="GO" id="GO:0000049">
    <property type="term" value="F:tRNA binding"/>
    <property type="evidence" value="ECO:0007669"/>
    <property type="project" value="UniProtKB-UniRule"/>
</dbReference>
<dbReference type="GO" id="GO:0006412">
    <property type="term" value="P:translation"/>
    <property type="evidence" value="ECO:0007669"/>
    <property type="project" value="UniProtKB-UniRule"/>
</dbReference>
<dbReference type="FunFam" id="3.30.1440.10:FF:000001">
    <property type="entry name" value="50S ribosomal protein L5"/>
    <property type="match status" value="1"/>
</dbReference>
<dbReference type="Gene3D" id="3.30.1440.10">
    <property type="match status" value="1"/>
</dbReference>
<dbReference type="HAMAP" id="MF_01333_B">
    <property type="entry name" value="Ribosomal_uL5_B"/>
    <property type="match status" value="1"/>
</dbReference>
<dbReference type="InterPro" id="IPR002132">
    <property type="entry name" value="Ribosomal_uL5"/>
</dbReference>
<dbReference type="InterPro" id="IPR020930">
    <property type="entry name" value="Ribosomal_uL5_bac-type"/>
</dbReference>
<dbReference type="InterPro" id="IPR031309">
    <property type="entry name" value="Ribosomal_uL5_C"/>
</dbReference>
<dbReference type="InterPro" id="IPR022803">
    <property type="entry name" value="Ribosomal_uL5_dom_sf"/>
</dbReference>
<dbReference type="InterPro" id="IPR031310">
    <property type="entry name" value="Ribosomal_uL5_N"/>
</dbReference>
<dbReference type="NCBIfam" id="NF000585">
    <property type="entry name" value="PRK00010.1"/>
    <property type="match status" value="1"/>
</dbReference>
<dbReference type="PANTHER" id="PTHR11994">
    <property type="entry name" value="60S RIBOSOMAL PROTEIN L11-RELATED"/>
    <property type="match status" value="1"/>
</dbReference>
<dbReference type="Pfam" id="PF00281">
    <property type="entry name" value="Ribosomal_L5"/>
    <property type="match status" value="1"/>
</dbReference>
<dbReference type="Pfam" id="PF00673">
    <property type="entry name" value="Ribosomal_L5_C"/>
    <property type="match status" value="1"/>
</dbReference>
<dbReference type="PIRSF" id="PIRSF002161">
    <property type="entry name" value="Ribosomal_L5"/>
    <property type="match status" value="1"/>
</dbReference>
<dbReference type="SUPFAM" id="SSF55282">
    <property type="entry name" value="RL5-like"/>
    <property type="match status" value="1"/>
</dbReference>